<accession>B3DJM5</accession>
<accession>Q8QGQ9</accession>
<name>TSH1_DANRE</name>
<comment type="function">
    <text evidence="5">Probable transcriptional regulator involved in developmental processes. May act as a transcriptional repressor (Potential).</text>
</comment>
<comment type="subcellular location">
    <subcellularLocation>
        <location evidence="1">Nucleus</location>
    </subcellularLocation>
</comment>
<comment type="developmental stage">
    <text evidence="4">Expressed in the 2-somite stage (10 hpf) in the neural keel between rhombomere 7 (r7) and the anterior spinal cord. Between the 2- and 20-somite stages (10-19 hpf), expressed caudally in the developing spinal cord. At 25 somite stage (21 hpf), detected throughout the spinal cord with expression levels gradually decreasing from anterior to posterior. At the prim-5 stage (24 hpf), detected in the pectoral fin buds and in the dorsal forebrain. At the long-pec stage (48 hpf), expressed in the telecephalon, tectum opticum, hindbrain, cerebellum, in the first pharyngeal arch, in the eyes and at very low level in the olfactory placodes. Around the protruding mouth stage (72-96 hpf), some expression is still detected in the eyes and only scattered expression is seen in the tectum, midbrain/hindbrain boundary and hindbrain. By the early larval stage (120 hpf), no expression is detected in the first pharyngeal arch and only low expression is detectable in the telecephalon, midbrain/hindbrain boundary, hindbrain and along the edges of the tectum.</text>
</comment>
<comment type="induction">
    <text evidence="4">Up-regulated in embryos by all-trans retinoic acid at the prim-5 stage (24 hpf) in more anterior regions of the neural tube, especially in the midbrain, with weaker expression in the forebrain and in the eye primordium.</text>
</comment>
<comment type="similarity">
    <text evidence="5">Belongs to the teashirt C2H2-type zinc-finger protein family.</text>
</comment>
<keyword id="KW-0217">Developmental protein</keyword>
<keyword id="KW-0238">DNA-binding</keyword>
<keyword id="KW-0371">Homeobox</keyword>
<keyword id="KW-0479">Metal-binding</keyword>
<keyword id="KW-0539">Nucleus</keyword>
<keyword id="KW-1185">Reference proteome</keyword>
<keyword id="KW-0677">Repeat</keyword>
<keyword id="KW-0678">Repressor</keyword>
<keyword id="KW-0804">Transcription</keyword>
<keyword id="KW-0805">Transcription regulation</keyword>
<keyword id="KW-0862">Zinc</keyword>
<keyword id="KW-0863">Zinc-finger</keyword>
<gene>
    <name type="primary">tshz1</name>
    <name type="synonym">sdccag33</name>
    <name type="synonym">tsrt</name>
</gene>
<feature type="chain" id="PRO_0000399473" description="Teashirt homolog 1">
    <location>
        <begin position="1"/>
        <end position="1158"/>
    </location>
</feature>
<feature type="zinc finger region" description="C2H2-type 1" evidence="2">
    <location>
        <begin position="288"/>
        <end position="312"/>
    </location>
</feature>
<feature type="zinc finger region" description="C2H2-type 2" evidence="2">
    <location>
        <begin position="349"/>
        <end position="373"/>
    </location>
</feature>
<feature type="zinc finger region" description="C2H2-type 3" evidence="2">
    <location>
        <begin position="461"/>
        <end position="485"/>
    </location>
</feature>
<feature type="DNA-binding region" description="Homeobox">
    <location>
        <begin position="963"/>
        <end position="1033"/>
    </location>
</feature>
<feature type="zinc finger region" description="C2H2-type 4" evidence="2">
    <location>
        <begin position="1048"/>
        <end position="1070"/>
    </location>
</feature>
<feature type="zinc finger region" description="C2H2-type 5" evidence="2">
    <location>
        <begin position="1115"/>
        <end position="1138"/>
    </location>
</feature>
<feature type="region of interest" description="Disordered" evidence="3">
    <location>
        <begin position="70"/>
        <end position="126"/>
    </location>
</feature>
<feature type="region of interest" description="Disordered" evidence="3">
    <location>
        <begin position="170"/>
        <end position="228"/>
    </location>
</feature>
<feature type="region of interest" description="Disordered" evidence="3">
    <location>
        <begin position="310"/>
        <end position="341"/>
    </location>
</feature>
<feature type="region of interest" description="Disordered" evidence="3">
    <location>
        <begin position="405"/>
        <end position="425"/>
    </location>
</feature>
<feature type="region of interest" description="Disordered" evidence="3">
    <location>
        <begin position="516"/>
        <end position="573"/>
    </location>
</feature>
<feature type="region of interest" description="Disordered" evidence="3">
    <location>
        <begin position="656"/>
        <end position="681"/>
    </location>
</feature>
<feature type="region of interest" description="Disordered" evidence="3">
    <location>
        <begin position="693"/>
        <end position="748"/>
    </location>
</feature>
<feature type="compositionally biased region" description="Polar residues" evidence="3">
    <location>
        <begin position="76"/>
        <end position="88"/>
    </location>
</feature>
<feature type="compositionally biased region" description="Low complexity" evidence="3">
    <location>
        <begin position="186"/>
        <end position="205"/>
    </location>
</feature>
<feature type="compositionally biased region" description="Low complexity" evidence="3">
    <location>
        <begin position="213"/>
        <end position="228"/>
    </location>
</feature>
<feature type="compositionally biased region" description="Basic and acidic residues" evidence="3">
    <location>
        <begin position="310"/>
        <end position="326"/>
    </location>
</feature>
<feature type="compositionally biased region" description="Basic and acidic residues" evidence="3">
    <location>
        <begin position="555"/>
        <end position="573"/>
    </location>
</feature>
<feature type="compositionally biased region" description="Low complexity" evidence="3">
    <location>
        <begin position="656"/>
        <end position="671"/>
    </location>
</feature>
<feature type="compositionally biased region" description="Basic and acidic residues" evidence="3">
    <location>
        <begin position="693"/>
        <end position="716"/>
    </location>
</feature>
<feature type="compositionally biased region" description="Basic and acidic residues" evidence="3">
    <location>
        <begin position="724"/>
        <end position="748"/>
    </location>
</feature>
<dbReference type="EMBL" id="AF242292">
    <property type="protein sequence ID" value="AAL88747.1"/>
    <property type="molecule type" value="mRNA"/>
</dbReference>
<dbReference type="EMBL" id="BC163536">
    <property type="protein sequence ID" value="AAI63536.1"/>
    <property type="molecule type" value="mRNA"/>
</dbReference>
<dbReference type="RefSeq" id="NP_001036211.1">
    <property type="nucleotide sequence ID" value="NM_001042746.1"/>
</dbReference>
<dbReference type="SMR" id="B3DJM5"/>
<dbReference type="FunCoup" id="B3DJM5">
    <property type="interactions" value="1209"/>
</dbReference>
<dbReference type="STRING" id="7955.ENSDARP00000148441"/>
<dbReference type="PaxDb" id="7955-ENSDARP00000023365"/>
<dbReference type="PeptideAtlas" id="B3DJM5"/>
<dbReference type="Ensembl" id="ENSDART00000186194">
    <property type="protein sequence ID" value="ENSDARP00000148441"/>
    <property type="gene ID" value="ENSDARG00000005026"/>
</dbReference>
<dbReference type="GeneID" id="369196"/>
<dbReference type="KEGG" id="dre:369196"/>
<dbReference type="AGR" id="ZFIN:ZDB-GENE-030820-3"/>
<dbReference type="CTD" id="10194"/>
<dbReference type="ZFIN" id="ZDB-GENE-030820-3">
    <property type="gene designation" value="tshz1"/>
</dbReference>
<dbReference type="eggNOG" id="ENOG502RJS7">
    <property type="taxonomic scope" value="Eukaryota"/>
</dbReference>
<dbReference type="InParanoid" id="B3DJM5"/>
<dbReference type="OMA" id="TNQEAGY"/>
<dbReference type="OrthoDB" id="5815793at2759"/>
<dbReference type="PhylomeDB" id="B3DJM5"/>
<dbReference type="TreeFam" id="TF328447"/>
<dbReference type="PRO" id="PR:B3DJM5"/>
<dbReference type="Proteomes" id="UP000000437">
    <property type="component" value="Chromosome 19"/>
</dbReference>
<dbReference type="Bgee" id="ENSDARG00000005026">
    <property type="expression patterns" value="Expressed in somite and 41 other cell types or tissues"/>
</dbReference>
<dbReference type="ExpressionAtlas" id="B3DJM5">
    <property type="expression patterns" value="baseline and differential"/>
</dbReference>
<dbReference type="GO" id="GO:0005634">
    <property type="term" value="C:nucleus"/>
    <property type="evidence" value="ECO:0000318"/>
    <property type="project" value="GO_Central"/>
</dbReference>
<dbReference type="GO" id="GO:0003677">
    <property type="term" value="F:DNA binding"/>
    <property type="evidence" value="ECO:0000318"/>
    <property type="project" value="GO_Central"/>
</dbReference>
<dbReference type="GO" id="GO:0000981">
    <property type="term" value="F:DNA-binding transcription factor activity, RNA polymerase II-specific"/>
    <property type="evidence" value="ECO:0000318"/>
    <property type="project" value="GO_Central"/>
</dbReference>
<dbReference type="GO" id="GO:0008270">
    <property type="term" value="F:zinc ion binding"/>
    <property type="evidence" value="ECO:0007669"/>
    <property type="project" value="UniProtKB-KW"/>
</dbReference>
<dbReference type="GO" id="GO:0006357">
    <property type="term" value="P:regulation of transcription by RNA polymerase II"/>
    <property type="evidence" value="ECO:0000318"/>
    <property type="project" value="GO_Central"/>
</dbReference>
<dbReference type="CDD" id="cd00086">
    <property type="entry name" value="homeodomain"/>
    <property type="match status" value="1"/>
</dbReference>
<dbReference type="Gene3D" id="3.30.160.60">
    <property type="entry name" value="Classic Zinc Finger"/>
    <property type="match status" value="2"/>
</dbReference>
<dbReference type="InterPro" id="IPR001356">
    <property type="entry name" value="HD"/>
</dbReference>
<dbReference type="InterPro" id="IPR027008">
    <property type="entry name" value="Teashirt_fam"/>
</dbReference>
<dbReference type="InterPro" id="IPR013087">
    <property type="entry name" value="Znf_C2H2_type"/>
</dbReference>
<dbReference type="PANTHER" id="PTHR12487:SF6">
    <property type="entry name" value="TEASHIRT HOMOLOG 1"/>
    <property type="match status" value="1"/>
</dbReference>
<dbReference type="PANTHER" id="PTHR12487">
    <property type="entry name" value="TEASHIRT-RELATED"/>
    <property type="match status" value="1"/>
</dbReference>
<dbReference type="SMART" id="SM00389">
    <property type="entry name" value="HOX"/>
    <property type="match status" value="1"/>
</dbReference>
<dbReference type="SMART" id="SM00355">
    <property type="entry name" value="ZnF_C2H2"/>
    <property type="match status" value="5"/>
</dbReference>
<dbReference type="PROSITE" id="PS00028">
    <property type="entry name" value="ZINC_FINGER_C2H2_1"/>
    <property type="match status" value="4"/>
</dbReference>
<dbReference type="PROSITE" id="PS50157">
    <property type="entry name" value="ZINC_FINGER_C2H2_2"/>
    <property type="match status" value="3"/>
</dbReference>
<organism>
    <name type="scientific">Danio rerio</name>
    <name type="common">Zebrafish</name>
    <name type="synonym">Brachydanio rerio</name>
    <dbReference type="NCBI Taxonomy" id="7955"/>
    <lineage>
        <taxon>Eukaryota</taxon>
        <taxon>Metazoa</taxon>
        <taxon>Chordata</taxon>
        <taxon>Craniata</taxon>
        <taxon>Vertebrata</taxon>
        <taxon>Euteleostomi</taxon>
        <taxon>Actinopterygii</taxon>
        <taxon>Neopterygii</taxon>
        <taxon>Teleostei</taxon>
        <taxon>Ostariophysi</taxon>
        <taxon>Cypriniformes</taxon>
        <taxon>Danionidae</taxon>
        <taxon>Danioninae</taxon>
        <taxon>Danio</taxon>
    </lineage>
</organism>
<protein>
    <recommendedName>
        <fullName>Teashirt homolog 1</fullName>
    </recommendedName>
    <alternativeName>
        <fullName>Teashirt-like zinc finger protein</fullName>
    </alternativeName>
</protein>
<reference key="1">
    <citation type="submission" date="2008-04" db="EMBL/GenBank/DDBJ databases">
        <authorList>
            <consortium name="NIH - Zebrafish Gene Collection (ZGC) project"/>
        </authorList>
    </citation>
    <scope>NUCLEOTIDE SEQUENCE [LARGE SCALE MRNA]</scope>
</reference>
<reference key="2">
    <citation type="journal article" date="2007" name="Gene Expr. Patterns">
        <title>Isolation and expression of zebrafish zinc-finger transcription factor gene tsh1.</title>
        <authorList>
            <person name="Wang H."/>
            <person name="Lee E.M.-J."/>
            <person name="Sperber S.M."/>
            <person name="Lin S."/>
            <person name="Ekker M."/>
            <person name="Long Q."/>
        </authorList>
    </citation>
    <scope>NUCLEOTIDE SEQUENCE [MRNA] OF 307-1158</scope>
    <scope>INDUCTION</scope>
    <scope>DEVELOPMENTAL STAGE</scope>
</reference>
<proteinExistence type="evidence at transcript level"/>
<evidence type="ECO:0000250" key="1"/>
<evidence type="ECO:0000255" key="2">
    <source>
        <dbReference type="PROSITE-ProRule" id="PRU00042"/>
    </source>
</evidence>
<evidence type="ECO:0000256" key="3">
    <source>
        <dbReference type="SAM" id="MobiDB-lite"/>
    </source>
</evidence>
<evidence type="ECO:0000269" key="4">
    <source>
    </source>
</evidence>
<evidence type="ECO:0000305" key="5"/>
<sequence>MISLILQFMLKLHILGTILSHHLFFPLCFVFSAYVPEDELKAAKIDEEHLQDDGLSLDGQDAEYLCNEEDDGREQLSYQNSPLSNGTNPDAGYGSPLSDTSDHLADFKSTSSKEGQDKEEVEDMDTDAKLSLQDSLAQMKAVYANLISDASWSSITKDIMKSKQVSASSINSTSSSHKGNNSVANSHASTIASSGASSSSNASASTKTNVTQSSNSTKATTLTNANNGTINGANSGGVAYDWHQAALAKTLQHTPYHLMPEPSLFSTVQLYRQNNKLYGPVFTGASKFRCKDCSAAYDTLVGLTVHMNETGHYRDDNKDKEEDRGKKWSKPRKRSLMEMEGKEDAQKVLKCMYCGHSFESLQDLSVHMIKTKHYQKVPLKEPMPALASKLVPSTKKRVFQDLMSPCSPDSISSTPGIPLAETAPTKDPKISNPYVTANNRYGYQNGASYTWQFEARKAQILKCMECGSSHDTLQQLTAHMMVTGHFLKVTNSASKKGKQLVFDPVVEEKIQSIPLPPTTTRLPAPAIKSQPDSPIHPSIMDDRKELEEEKFEEPEEKKIKQEKEDPSERVEKSEKLSHYKYLREEDLEESPKGGLDILKSLENTVSSAISKAQTGTPTWGGYPSIHAAYQLQGSVKSSIPAIQSVQIQPTFNASSLKSLTSDSSTLIHSPSSPSPPPNHKSNVLAMEELVEKVTGKIPSKKDRDEKLTERNSKHLTAELPSPVLKERKDLPKPDDLTKPTKNGTVDKDLEHTPVREGEYKESHADNPIKNGTDALKTQVSNGCGNLGIITDHSPEQPLVNPLSALQSIMNTHLGKASKTVSPLLDPLAMLYKISNNMMEKPMYNPAQVKQVEPINRYYENDDDQPMDLTKSKSGIGPTNNCTSTIISNSSITNSTRPILSTLAEQVSSPLRENALMDISDMVKNLTGRLTPKSSTPSSISEKSDADGCAFEDGLEDLSPIQKRKGRQSNWNPQHLLILQAQFASSLRETPDGKYIITDLGPQERVHICKFTGLSMTTISHWLANVKYQLRRTGGTKFLKNIDSGHPLFLCSDCASQFRTPSTYINHLESHLGFSLKDLSKLSIDLIRDQQAVTKMITDKTFRALDLNEEDSNSIFQCKLCNRTFVSKHAVKLHLSKTHGKSPEDHLIFVTELEKLEKA</sequence>